<keyword id="KW-0963">Cytoplasm</keyword>
<keyword id="KW-0574">Periplasm</keyword>
<keyword id="KW-1185">Reference proteome</keyword>
<keyword id="KW-0732">Signal</keyword>
<sequence length="170" mass="18866">MSGILTRWRQFGKRYFWPHLLLGMVAASLGLPALSNAAEPNAPAKATTRNHEPSAKVNFGQLALLEANTRRPNSNYSVDYWHQHAIRTVIRHLSFAMAPQTLPVAEESLPLQAQHLALLDTLSALLTQEGTPSEKGYRIDYAHFTPQAKFSTPVWISQAQGIRAGPQRLS</sequence>
<feature type="signal peptide" evidence="1">
    <location>
        <begin position="1"/>
        <end position="37"/>
    </location>
</feature>
<feature type="chain" id="PRO_0000031989" description="Secretion monitor">
    <location>
        <begin position="38"/>
        <end position="170"/>
    </location>
</feature>
<evidence type="ECO:0000255" key="1">
    <source>
        <dbReference type="HAMAP-Rule" id="MF_01332"/>
    </source>
</evidence>
<evidence type="ECO:0000305" key="2"/>
<proteinExistence type="inferred from homology"/>
<protein>
    <recommendedName>
        <fullName evidence="1">Secretion monitor</fullName>
    </recommendedName>
</protein>
<organism>
    <name type="scientific">Escherichia coli O157:H7</name>
    <dbReference type="NCBI Taxonomy" id="83334"/>
    <lineage>
        <taxon>Bacteria</taxon>
        <taxon>Pseudomonadati</taxon>
        <taxon>Pseudomonadota</taxon>
        <taxon>Gammaproteobacteria</taxon>
        <taxon>Enterobacterales</taxon>
        <taxon>Enterobacteriaceae</taxon>
        <taxon>Escherichia</taxon>
    </lineage>
</organism>
<accession>P62397</accession>
<accession>P58327</accession>
<gene>
    <name evidence="1" type="primary">secM</name>
    <name type="ordered locus">Z0107</name>
    <name type="ordered locus">ECs0101</name>
</gene>
<reference key="1">
    <citation type="journal article" date="2001" name="Nature">
        <title>Genome sequence of enterohaemorrhagic Escherichia coli O157:H7.</title>
        <authorList>
            <person name="Perna N.T."/>
            <person name="Plunkett G. III"/>
            <person name="Burland V."/>
            <person name="Mau B."/>
            <person name="Glasner J.D."/>
            <person name="Rose D.J."/>
            <person name="Mayhew G.F."/>
            <person name="Evans P.S."/>
            <person name="Gregor J."/>
            <person name="Kirkpatrick H.A."/>
            <person name="Posfai G."/>
            <person name="Hackett J."/>
            <person name="Klink S."/>
            <person name="Boutin A."/>
            <person name="Shao Y."/>
            <person name="Miller L."/>
            <person name="Grotbeck E.J."/>
            <person name="Davis N.W."/>
            <person name="Lim A."/>
            <person name="Dimalanta E.T."/>
            <person name="Potamousis K."/>
            <person name="Apodaca J."/>
            <person name="Anantharaman T.S."/>
            <person name="Lin J."/>
            <person name="Yen G."/>
            <person name="Schwartz D.C."/>
            <person name="Welch R.A."/>
            <person name="Blattner F.R."/>
        </authorList>
    </citation>
    <scope>NUCLEOTIDE SEQUENCE [LARGE SCALE GENOMIC DNA]</scope>
    <source>
        <strain>O157:H7 / EDL933 / ATCC 700927 / EHEC</strain>
    </source>
</reference>
<reference key="2">
    <citation type="journal article" date="2001" name="DNA Res.">
        <title>Complete genome sequence of enterohemorrhagic Escherichia coli O157:H7 and genomic comparison with a laboratory strain K-12.</title>
        <authorList>
            <person name="Hayashi T."/>
            <person name="Makino K."/>
            <person name="Ohnishi M."/>
            <person name="Kurokawa K."/>
            <person name="Ishii K."/>
            <person name="Yokoyama K."/>
            <person name="Han C.-G."/>
            <person name="Ohtsubo E."/>
            <person name="Nakayama K."/>
            <person name="Murata T."/>
            <person name="Tanaka M."/>
            <person name="Tobe T."/>
            <person name="Iida T."/>
            <person name="Takami H."/>
            <person name="Honda T."/>
            <person name="Sasakawa C."/>
            <person name="Ogasawara N."/>
            <person name="Yasunaga T."/>
            <person name="Kuhara S."/>
            <person name="Shiba T."/>
            <person name="Hattori M."/>
            <person name="Shinagawa H."/>
        </authorList>
    </citation>
    <scope>NUCLEOTIDE SEQUENCE [LARGE SCALE GENOMIC DNA]</scope>
    <source>
        <strain>O157:H7 / Sakai / RIMD 0509952 / EHEC</strain>
    </source>
</reference>
<dbReference type="EMBL" id="AE005174">
    <property type="protein sequence ID" value="AAG54401.1"/>
    <property type="status" value="ALT_INIT"/>
    <property type="molecule type" value="Genomic_DNA"/>
</dbReference>
<dbReference type="EMBL" id="BA000007">
    <property type="protein sequence ID" value="BAB33524.2"/>
    <property type="molecule type" value="Genomic_DNA"/>
</dbReference>
<dbReference type="PIR" id="E85492">
    <property type="entry name" value="E85492"/>
</dbReference>
<dbReference type="PIR" id="E90641">
    <property type="entry name" value="E90641"/>
</dbReference>
<dbReference type="RefSeq" id="NP_308128.2">
    <property type="nucleotide sequence ID" value="NC_002695.1"/>
</dbReference>
<dbReference type="RefSeq" id="WP_000014320.1">
    <property type="nucleotide sequence ID" value="NZ_VOAI01000002.1"/>
</dbReference>
<dbReference type="SMR" id="P62397"/>
<dbReference type="STRING" id="155864.Z0107"/>
<dbReference type="GeneID" id="75169997"/>
<dbReference type="GeneID" id="913588"/>
<dbReference type="KEGG" id="ece:Z0107"/>
<dbReference type="KEGG" id="ecs:ECs_0101"/>
<dbReference type="PATRIC" id="fig|386585.9.peg.201"/>
<dbReference type="eggNOG" id="ENOG5031JGK">
    <property type="taxonomic scope" value="Bacteria"/>
</dbReference>
<dbReference type="HOGENOM" id="CLU_108853_0_0_6"/>
<dbReference type="OMA" id="NYWQQHA"/>
<dbReference type="Proteomes" id="UP000000558">
    <property type="component" value="Chromosome"/>
</dbReference>
<dbReference type="Proteomes" id="UP000002519">
    <property type="component" value="Chromosome"/>
</dbReference>
<dbReference type="GO" id="GO:0005829">
    <property type="term" value="C:cytosol"/>
    <property type="evidence" value="ECO:0007669"/>
    <property type="project" value="UniProtKB-SubCell"/>
</dbReference>
<dbReference type="GO" id="GO:0042597">
    <property type="term" value="C:periplasmic space"/>
    <property type="evidence" value="ECO:0007669"/>
    <property type="project" value="UniProtKB-SubCell"/>
</dbReference>
<dbReference type="GO" id="GO:0045182">
    <property type="term" value="F:translation regulator activity"/>
    <property type="evidence" value="ECO:0007669"/>
    <property type="project" value="InterPro"/>
</dbReference>
<dbReference type="HAMAP" id="MF_01332">
    <property type="entry name" value="SecM"/>
    <property type="match status" value="1"/>
</dbReference>
<dbReference type="InterPro" id="IPR009502">
    <property type="entry name" value="SecM"/>
</dbReference>
<dbReference type="NCBIfam" id="NF002799">
    <property type="entry name" value="PRK02943.1-1"/>
    <property type="match status" value="1"/>
</dbReference>
<dbReference type="Pfam" id="PF06558">
    <property type="entry name" value="SecM"/>
    <property type="match status" value="1"/>
</dbReference>
<dbReference type="PIRSF" id="PIRSF004572">
    <property type="entry name" value="SecM"/>
    <property type="match status" value="1"/>
</dbReference>
<comment type="function">
    <text evidence="1">Regulates secA expression by translational coupling of the secM secA operon. Translational pausing at a specific Pro residue 5 residues before the end of the protein may allow disruption of a mRNA repressor helix that normally suppresses secA translation initiation.</text>
</comment>
<comment type="subcellular location">
    <subcellularLocation>
        <location evidence="1">Cytoplasm</location>
        <location evidence="1">Cytosol</location>
    </subcellularLocation>
    <subcellularLocation>
        <location evidence="1">Periplasm</location>
    </subcellularLocation>
    <text evidence="1">The active form is cytosolic, while the periplasmic form is rapidly degraded, mainly by the tail-specific protease.</text>
</comment>
<comment type="similarity">
    <text evidence="1">Belongs to the SecM family.</text>
</comment>
<comment type="sequence caution" evidence="2">
    <conflict type="erroneous initiation">
        <sequence resource="EMBL-CDS" id="AAG54401"/>
    </conflict>
    <text>Extended N-terminus.</text>
</comment>
<name>SECM_ECO57</name>